<name>DUT_NEIM0</name>
<evidence type="ECO:0000255" key="1">
    <source>
        <dbReference type="HAMAP-Rule" id="MF_00116"/>
    </source>
</evidence>
<protein>
    <recommendedName>
        <fullName evidence="1">Deoxyuridine 5'-triphosphate nucleotidohydrolase</fullName>
        <shortName evidence="1">dUTPase</shortName>
        <ecNumber evidence="1">3.6.1.23</ecNumber>
    </recommendedName>
    <alternativeName>
        <fullName evidence="1">dUTP pyrophosphatase</fullName>
    </alternativeName>
</protein>
<feature type="chain" id="PRO_1000076062" description="Deoxyuridine 5'-triphosphate nucleotidohydrolase">
    <location>
        <begin position="1"/>
        <end position="150"/>
    </location>
</feature>
<feature type="binding site" evidence="1">
    <location>
        <begin position="69"/>
        <end position="71"/>
    </location>
    <ligand>
        <name>substrate</name>
    </ligand>
</feature>
<feature type="binding site" evidence="1">
    <location>
        <position position="82"/>
    </location>
    <ligand>
        <name>substrate</name>
    </ligand>
</feature>
<feature type="binding site" evidence="1">
    <location>
        <begin position="86"/>
        <end position="88"/>
    </location>
    <ligand>
        <name>substrate</name>
    </ligand>
</feature>
<feature type="binding site" evidence="1">
    <location>
        <position position="96"/>
    </location>
    <ligand>
        <name>substrate</name>
    </ligand>
</feature>
<comment type="function">
    <text evidence="1">This enzyme is involved in nucleotide metabolism: it produces dUMP, the immediate precursor of thymidine nucleotides and it decreases the intracellular concentration of dUTP so that uracil cannot be incorporated into DNA.</text>
</comment>
<comment type="catalytic activity">
    <reaction evidence="1">
        <text>dUTP + H2O = dUMP + diphosphate + H(+)</text>
        <dbReference type="Rhea" id="RHEA:10248"/>
        <dbReference type="ChEBI" id="CHEBI:15377"/>
        <dbReference type="ChEBI" id="CHEBI:15378"/>
        <dbReference type="ChEBI" id="CHEBI:33019"/>
        <dbReference type="ChEBI" id="CHEBI:61555"/>
        <dbReference type="ChEBI" id="CHEBI:246422"/>
        <dbReference type="EC" id="3.6.1.23"/>
    </reaction>
</comment>
<comment type="cofactor">
    <cofactor evidence="1">
        <name>Mg(2+)</name>
        <dbReference type="ChEBI" id="CHEBI:18420"/>
    </cofactor>
</comment>
<comment type="pathway">
    <text evidence="1">Pyrimidine metabolism; dUMP biosynthesis; dUMP from dCTP (dUTP route): step 2/2.</text>
</comment>
<comment type="similarity">
    <text evidence="1">Belongs to the dUTPase family.</text>
</comment>
<gene>
    <name evidence="1" type="primary">dut</name>
    <name type="ordered locus">NMCC_0854</name>
</gene>
<keyword id="KW-0378">Hydrolase</keyword>
<keyword id="KW-0460">Magnesium</keyword>
<keyword id="KW-0479">Metal-binding</keyword>
<keyword id="KW-0546">Nucleotide metabolism</keyword>
<dbReference type="EC" id="3.6.1.23" evidence="1"/>
<dbReference type="EMBL" id="CP000381">
    <property type="protein sequence ID" value="ABX73038.1"/>
    <property type="molecule type" value="Genomic_DNA"/>
</dbReference>
<dbReference type="RefSeq" id="WP_010951049.1">
    <property type="nucleotide sequence ID" value="NC_010120.1"/>
</dbReference>
<dbReference type="SMR" id="A9M439"/>
<dbReference type="KEGG" id="nmn:NMCC_0854"/>
<dbReference type="HOGENOM" id="CLU_068508_1_1_4"/>
<dbReference type="UniPathway" id="UPA00610">
    <property type="reaction ID" value="UER00666"/>
</dbReference>
<dbReference type="Proteomes" id="UP000001177">
    <property type="component" value="Chromosome"/>
</dbReference>
<dbReference type="GO" id="GO:0004170">
    <property type="term" value="F:dUTP diphosphatase activity"/>
    <property type="evidence" value="ECO:0007669"/>
    <property type="project" value="UniProtKB-UniRule"/>
</dbReference>
<dbReference type="GO" id="GO:0000287">
    <property type="term" value="F:magnesium ion binding"/>
    <property type="evidence" value="ECO:0007669"/>
    <property type="project" value="UniProtKB-UniRule"/>
</dbReference>
<dbReference type="GO" id="GO:0006226">
    <property type="term" value="P:dUMP biosynthetic process"/>
    <property type="evidence" value="ECO:0007669"/>
    <property type="project" value="UniProtKB-UniRule"/>
</dbReference>
<dbReference type="GO" id="GO:0046081">
    <property type="term" value="P:dUTP catabolic process"/>
    <property type="evidence" value="ECO:0007669"/>
    <property type="project" value="InterPro"/>
</dbReference>
<dbReference type="CDD" id="cd07557">
    <property type="entry name" value="trimeric_dUTPase"/>
    <property type="match status" value="1"/>
</dbReference>
<dbReference type="FunFam" id="2.70.40.10:FF:000002">
    <property type="entry name" value="dUTP diphosphatase"/>
    <property type="match status" value="1"/>
</dbReference>
<dbReference type="Gene3D" id="2.70.40.10">
    <property type="match status" value="1"/>
</dbReference>
<dbReference type="HAMAP" id="MF_00116">
    <property type="entry name" value="dUTPase_bact"/>
    <property type="match status" value="1"/>
</dbReference>
<dbReference type="InterPro" id="IPR008181">
    <property type="entry name" value="dUTPase"/>
</dbReference>
<dbReference type="InterPro" id="IPR029054">
    <property type="entry name" value="dUTPase-like"/>
</dbReference>
<dbReference type="InterPro" id="IPR036157">
    <property type="entry name" value="dUTPase-like_sf"/>
</dbReference>
<dbReference type="InterPro" id="IPR033704">
    <property type="entry name" value="dUTPase_trimeric"/>
</dbReference>
<dbReference type="NCBIfam" id="TIGR00576">
    <property type="entry name" value="dut"/>
    <property type="match status" value="1"/>
</dbReference>
<dbReference type="NCBIfam" id="NF001862">
    <property type="entry name" value="PRK00601.1"/>
    <property type="match status" value="1"/>
</dbReference>
<dbReference type="PANTHER" id="PTHR11241">
    <property type="entry name" value="DEOXYURIDINE 5'-TRIPHOSPHATE NUCLEOTIDOHYDROLASE"/>
    <property type="match status" value="1"/>
</dbReference>
<dbReference type="PANTHER" id="PTHR11241:SF0">
    <property type="entry name" value="DEOXYURIDINE 5'-TRIPHOSPHATE NUCLEOTIDOHYDROLASE"/>
    <property type="match status" value="1"/>
</dbReference>
<dbReference type="Pfam" id="PF00692">
    <property type="entry name" value="dUTPase"/>
    <property type="match status" value="1"/>
</dbReference>
<dbReference type="SUPFAM" id="SSF51283">
    <property type="entry name" value="dUTPase-like"/>
    <property type="match status" value="1"/>
</dbReference>
<reference key="1">
    <citation type="journal article" date="2008" name="Genomics">
        <title>Characterization of ST-4821 complex, a unique Neisseria meningitidis clone.</title>
        <authorList>
            <person name="Peng J."/>
            <person name="Yang L."/>
            <person name="Yang F."/>
            <person name="Yang J."/>
            <person name="Yan Y."/>
            <person name="Nie H."/>
            <person name="Zhang X."/>
            <person name="Xiong Z."/>
            <person name="Jiang Y."/>
            <person name="Cheng F."/>
            <person name="Xu X."/>
            <person name="Chen S."/>
            <person name="Sun L."/>
            <person name="Li W."/>
            <person name="Shen Y."/>
            <person name="Shao Z."/>
            <person name="Liang X."/>
            <person name="Xu J."/>
            <person name="Jin Q."/>
        </authorList>
    </citation>
    <scope>NUCLEOTIDE SEQUENCE [LARGE SCALE GENOMIC DNA]</scope>
    <source>
        <strain>053442</strain>
    </source>
</reference>
<accession>A9M439</accession>
<organism>
    <name type="scientific">Neisseria meningitidis serogroup C (strain 053442)</name>
    <dbReference type="NCBI Taxonomy" id="374833"/>
    <lineage>
        <taxon>Bacteria</taxon>
        <taxon>Pseudomonadati</taxon>
        <taxon>Pseudomonadota</taxon>
        <taxon>Betaproteobacteria</taxon>
        <taxon>Neisseriales</taxon>
        <taxon>Neisseriaceae</taxon>
        <taxon>Neisseria</taxon>
    </lineage>
</organism>
<proteinExistence type="inferred from homology"/>
<sequence length="150" mass="16103">MNIEVEMKVLDERMADFIPAYATEGSAGLDLRACLDEEVVLQPGETFLVPTGLAIYLANPAYAAVLLPRSGLGHKHGIVLGNLVGLIDSDYQGELKVSLWNRGSEPFAVKPFERIAQMVIVPVVQAGFKRVEEFVGSSRGEGGFGSTGSH</sequence>